<reference key="1">
    <citation type="journal article" date="2008" name="Chem. Biol. Interact.">
        <title>Extending the Bacillus cereus group genomics to putative food-borne pathogens of different toxicity.</title>
        <authorList>
            <person name="Lapidus A."/>
            <person name="Goltsman E."/>
            <person name="Auger S."/>
            <person name="Galleron N."/>
            <person name="Segurens B."/>
            <person name="Dossat C."/>
            <person name="Land M.L."/>
            <person name="Broussolle V."/>
            <person name="Brillard J."/>
            <person name="Guinebretiere M.-H."/>
            <person name="Sanchis V."/>
            <person name="Nguen-the C."/>
            <person name="Lereclus D."/>
            <person name="Richardson P."/>
            <person name="Wincker P."/>
            <person name="Weissenbach J."/>
            <person name="Ehrlich S.D."/>
            <person name="Sorokin A."/>
        </authorList>
    </citation>
    <scope>NUCLEOTIDE SEQUENCE [LARGE SCALE GENOMIC DNA]</scope>
    <source>
        <strain>DSM 22905 / CIP 110041 / 391-98 / NVH 391-98</strain>
    </source>
</reference>
<organism>
    <name type="scientific">Bacillus cytotoxicus (strain DSM 22905 / CIP 110041 / 391-98 / NVH 391-98)</name>
    <dbReference type="NCBI Taxonomy" id="315749"/>
    <lineage>
        <taxon>Bacteria</taxon>
        <taxon>Bacillati</taxon>
        <taxon>Bacillota</taxon>
        <taxon>Bacilli</taxon>
        <taxon>Bacillales</taxon>
        <taxon>Bacillaceae</taxon>
        <taxon>Bacillus</taxon>
        <taxon>Bacillus cereus group</taxon>
    </lineage>
</organism>
<evidence type="ECO:0000255" key="1">
    <source>
        <dbReference type="HAMAP-Rule" id="MF_00421"/>
    </source>
</evidence>
<feature type="chain" id="PRO_1000194848" description="Phosphoribosylformylglycinamidine synthase subunit PurQ">
    <location>
        <begin position="1"/>
        <end position="227"/>
    </location>
</feature>
<feature type="domain" description="Glutamine amidotransferase type-1" evidence="1">
    <location>
        <begin position="3"/>
        <end position="225"/>
    </location>
</feature>
<feature type="active site" description="Nucleophile" evidence="1">
    <location>
        <position position="86"/>
    </location>
</feature>
<feature type="active site" evidence="1">
    <location>
        <position position="194"/>
    </location>
</feature>
<feature type="active site" evidence="1">
    <location>
        <position position="196"/>
    </location>
</feature>
<sequence length="227" mass="25312">MKFAVIVFPGSNCDVDMFHAIKDELGEDVDYVWHDAENLDEYDAILLPGGFSYGDYLRCGAISRFANAMKAVQKAAEQGKPILGVCNGFQILVESGLLPGVLIRNQNLKFMCRTVPLRVENNETMFTSQYNKGEIIHIPIAHGEGNYYCDEATLKKLEQKNQIVFRYVDNPNGSVSDIAGIVNEKGNVLGMMPHPERAVNEILGGAEGLKVFQSILKYWRETYVVNA</sequence>
<gene>
    <name evidence="1" type="primary">purQ</name>
    <name type="ordered locus">Bcer98_0272</name>
</gene>
<keyword id="KW-0067">ATP-binding</keyword>
<keyword id="KW-0963">Cytoplasm</keyword>
<keyword id="KW-0315">Glutamine amidotransferase</keyword>
<keyword id="KW-0378">Hydrolase</keyword>
<keyword id="KW-0436">Ligase</keyword>
<keyword id="KW-0547">Nucleotide-binding</keyword>
<keyword id="KW-0658">Purine biosynthesis</keyword>
<proteinExistence type="inferred from homology"/>
<accession>A7GKH7</accession>
<name>PURQ_BACCN</name>
<comment type="function">
    <text evidence="1">Part of the phosphoribosylformylglycinamidine synthase complex involved in the purines biosynthetic pathway. Catalyzes the ATP-dependent conversion of formylglycinamide ribonucleotide (FGAR) and glutamine to yield formylglycinamidine ribonucleotide (FGAM) and glutamate. The FGAM synthase complex is composed of three subunits. PurQ produces an ammonia molecule by converting glutamine to glutamate. PurL transfers the ammonia molecule to FGAR to form FGAM in an ATP-dependent manner. PurS interacts with PurQ and PurL and is thought to assist in the transfer of the ammonia molecule from PurQ to PurL.</text>
</comment>
<comment type="catalytic activity">
    <reaction evidence="1">
        <text>N(2)-formyl-N(1)-(5-phospho-beta-D-ribosyl)glycinamide + L-glutamine + ATP + H2O = 2-formamido-N(1)-(5-O-phospho-beta-D-ribosyl)acetamidine + L-glutamate + ADP + phosphate + H(+)</text>
        <dbReference type="Rhea" id="RHEA:17129"/>
        <dbReference type="ChEBI" id="CHEBI:15377"/>
        <dbReference type="ChEBI" id="CHEBI:15378"/>
        <dbReference type="ChEBI" id="CHEBI:29985"/>
        <dbReference type="ChEBI" id="CHEBI:30616"/>
        <dbReference type="ChEBI" id="CHEBI:43474"/>
        <dbReference type="ChEBI" id="CHEBI:58359"/>
        <dbReference type="ChEBI" id="CHEBI:147286"/>
        <dbReference type="ChEBI" id="CHEBI:147287"/>
        <dbReference type="ChEBI" id="CHEBI:456216"/>
        <dbReference type="EC" id="6.3.5.3"/>
    </reaction>
</comment>
<comment type="catalytic activity">
    <reaction evidence="1">
        <text>L-glutamine + H2O = L-glutamate + NH4(+)</text>
        <dbReference type="Rhea" id="RHEA:15889"/>
        <dbReference type="ChEBI" id="CHEBI:15377"/>
        <dbReference type="ChEBI" id="CHEBI:28938"/>
        <dbReference type="ChEBI" id="CHEBI:29985"/>
        <dbReference type="ChEBI" id="CHEBI:58359"/>
        <dbReference type="EC" id="3.5.1.2"/>
    </reaction>
</comment>
<comment type="pathway">
    <text evidence="1">Purine metabolism; IMP biosynthesis via de novo pathway; 5-amino-1-(5-phospho-D-ribosyl)imidazole from N(2)-formyl-N(1)-(5-phospho-D-ribosyl)glycinamide: step 1/2.</text>
</comment>
<comment type="subunit">
    <text evidence="1">Part of the FGAM synthase complex composed of 1 PurL, 1 PurQ and 2 PurS subunits.</text>
</comment>
<comment type="subcellular location">
    <subcellularLocation>
        <location evidence="1">Cytoplasm</location>
    </subcellularLocation>
</comment>
<protein>
    <recommendedName>
        <fullName evidence="1">Phosphoribosylformylglycinamidine synthase subunit PurQ</fullName>
        <shortName evidence="1">FGAM synthase</shortName>
        <ecNumber evidence="1">6.3.5.3</ecNumber>
    </recommendedName>
    <alternativeName>
        <fullName evidence="1">Formylglycinamide ribonucleotide amidotransferase subunit I</fullName>
        <shortName evidence="1">FGAR amidotransferase I</shortName>
        <shortName evidence="1">FGAR-AT I</shortName>
    </alternativeName>
    <alternativeName>
        <fullName evidence="1">Glutaminase PurQ</fullName>
        <ecNumber evidence="1">3.5.1.2</ecNumber>
    </alternativeName>
    <alternativeName>
        <fullName evidence="1">Phosphoribosylformylglycinamidine synthase subunit I</fullName>
    </alternativeName>
</protein>
<dbReference type="EC" id="6.3.5.3" evidence="1"/>
<dbReference type="EC" id="3.5.1.2" evidence="1"/>
<dbReference type="EMBL" id="CP000764">
    <property type="protein sequence ID" value="ABS20635.1"/>
    <property type="molecule type" value="Genomic_DNA"/>
</dbReference>
<dbReference type="RefSeq" id="WP_011983394.1">
    <property type="nucleotide sequence ID" value="NC_009674.1"/>
</dbReference>
<dbReference type="SMR" id="A7GKH7"/>
<dbReference type="STRING" id="315749.Bcer98_0272"/>
<dbReference type="GeneID" id="33895627"/>
<dbReference type="KEGG" id="bcy:Bcer98_0272"/>
<dbReference type="eggNOG" id="COG0047">
    <property type="taxonomic scope" value="Bacteria"/>
</dbReference>
<dbReference type="HOGENOM" id="CLU_001031_3_1_9"/>
<dbReference type="OrthoDB" id="9804441at2"/>
<dbReference type="UniPathway" id="UPA00074">
    <property type="reaction ID" value="UER00128"/>
</dbReference>
<dbReference type="Proteomes" id="UP000002300">
    <property type="component" value="Chromosome"/>
</dbReference>
<dbReference type="GO" id="GO:0005737">
    <property type="term" value="C:cytoplasm"/>
    <property type="evidence" value="ECO:0007669"/>
    <property type="project" value="UniProtKB-SubCell"/>
</dbReference>
<dbReference type="GO" id="GO:0005524">
    <property type="term" value="F:ATP binding"/>
    <property type="evidence" value="ECO:0007669"/>
    <property type="project" value="UniProtKB-KW"/>
</dbReference>
<dbReference type="GO" id="GO:0004359">
    <property type="term" value="F:glutaminase activity"/>
    <property type="evidence" value="ECO:0007669"/>
    <property type="project" value="UniProtKB-EC"/>
</dbReference>
<dbReference type="GO" id="GO:0004642">
    <property type="term" value="F:phosphoribosylformylglycinamidine synthase activity"/>
    <property type="evidence" value="ECO:0007669"/>
    <property type="project" value="UniProtKB-UniRule"/>
</dbReference>
<dbReference type="GO" id="GO:0006189">
    <property type="term" value="P:'de novo' IMP biosynthetic process"/>
    <property type="evidence" value="ECO:0007669"/>
    <property type="project" value="UniProtKB-UniRule"/>
</dbReference>
<dbReference type="CDD" id="cd01740">
    <property type="entry name" value="GATase1_FGAR_AT"/>
    <property type="match status" value="1"/>
</dbReference>
<dbReference type="FunFam" id="3.40.50.880:FF:000019">
    <property type="entry name" value="Phosphoribosylformylglycinamidine synthase subunit PurQ"/>
    <property type="match status" value="1"/>
</dbReference>
<dbReference type="Gene3D" id="3.40.50.880">
    <property type="match status" value="1"/>
</dbReference>
<dbReference type="HAMAP" id="MF_00421">
    <property type="entry name" value="PurQ"/>
    <property type="match status" value="1"/>
</dbReference>
<dbReference type="InterPro" id="IPR029062">
    <property type="entry name" value="Class_I_gatase-like"/>
</dbReference>
<dbReference type="InterPro" id="IPR010075">
    <property type="entry name" value="PRibForGlyAmidine_synth_PurQ"/>
</dbReference>
<dbReference type="NCBIfam" id="TIGR01737">
    <property type="entry name" value="FGAM_synth_I"/>
    <property type="match status" value="1"/>
</dbReference>
<dbReference type="NCBIfam" id="NF002957">
    <property type="entry name" value="PRK03619.1"/>
    <property type="match status" value="1"/>
</dbReference>
<dbReference type="PANTHER" id="PTHR47552">
    <property type="entry name" value="PHOSPHORIBOSYLFORMYLGLYCINAMIDINE SYNTHASE SUBUNIT PURQ"/>
    <property type="match status" value="1"/>
</dbReference>
<dbReference type="PANTHER" id="PTHR47552:SF1">
    <property type="entry name" value="PHOSPHORIBOSYLFORMYLGLYCINAMIDINE SYNTHASE SUBUNIT PURQ"/>
    <property type="match status" value="1"/>
</dbReference>
<dbReference type="Pfam" id="PF13507">
    <property type="entry name" value="GATase_5"/>
    <property type="match status" value="1"/>
</dbReference>
<dbReference type="PIRSF" id="PIRSF001586">
    <property type="entry name" value="FGAM_synth_I"/>
    <property type="match status" value="1"/>
</dbReference>
<dbReference type="SMART" id="SM01211">
    <property type="entry name" value="GATase_5"/>
    <property type="match status" value="1"/>
</dbReference>
<dbReference type="SUPFAM" id="SSF52317">
    <property type="entry name" value="Class I glutamine amidotransferase-like"/>
    <property type="match status" value="1"/>
</dbReference>
<dbReference type="PROSITE" id="PS51273">
    <property type="entry name" value="GATASE_TYPE_1"/>
    <property type="match status" value="1"/>
</dbReference>